<protein>
    <recommendedName>
        <fullName>Mannose/glucose-specific lectin alpha chain</fullName>
    </recommendedName>
</protein>
<accession>P02868</accession>
<organism>
    <name type="scientific">Vicia cracca</name>
    <name type="common">Bird vetch</name>
    <dbReference type="NCBI Taxonomy" id="3905"/>
    <lineage>
        <taxon>Eukaryota</taxon>
        <taxon>Viridiplantae</taxon>
        <taxon>Streptophyta</taxon>
        <taxon>Embryophyta</taxon>
        <taxon>Tracheophyta</taxon>
        <taxon>Spermatophyta</taxon>
        <taxon>Magnoliopsida</taxon>
        <taxon>eudicotyledons</taxon>
        <taxon>Gunneridae</taxon>
        <taxon>Pentapetalae</taxon>
        <taxon>rosids</taxon>
        <taxon>fabids</taxon>
        <taxon>Fabales</taxon>
        <taxon>Fabaceae</taxon>
        <taxon>Papilionoideae</taxon>
        <taxon>50 kb inversion clade</taxon>
        <taxon>NPAAA clade</taxon>
        <taxon>Hologalegina</taxon>
        <taxon>IRL clade</taxon>
        <taxon>Fabeae</taxon>
        <taxon>Vicia</taxon>
    </lineage>
</organism>
<sequence length="53" mass="5767">VTSYTLSDVVPLKDVVPEWVRIGFSATPGAEYAAHEVLSWSFHSELSGTSSKQ</sequence>
<proteinExistence type="evidence at protein level"/>
<name>LECA_VICCR</name>
<keyword id="KW-0903">Direct protein sequencing</keyword>
<keyword id="KW-0430">Lectin</keyword>
<keyword id="KW-0465">Mannose-binding</keyword>
<dbReference type="PIR" id="A03360">
    <property type="entry name" value="LNVTAC"/>
</dbReference>
<dbReference type="GO" id="GO:0005537">
    <property type="term" value="F:D-mannose binding"/>
    <property type="evidence" value="ECO:0007669"/>
    <property type="project" value="UniProtKB-KW"/>
</dbReference>
<dbReference type="Gene3D" id="2.60.120.200">
    <property type="match status" value="1"/>
</dbReference>
<dbReference type="InterPro" id="IPR013320">
    <property type="entry name" value="ConA-like_dom_sf"/>
</dbReference>
<dbReference type="InterPro" id="IPR000985">
    <property type="entry name" value="Lectin_LegA_CS"/>
</dbReference>
<dbReference type="InterPro" id="IPR001220">
    <property type="entry name" value="Legume_lectin_dom"/>
</dbReference>
<dbReference type="Pfam" id="PF00139">
    <property type="entry name" value="Lectin_legB"/>
    <property type="match status" value="1"/>
</dbReference>
<dbReference type="SUPFAM" id="SSF49899">
    <property type="entry name" value="Concanavalin A-like lectins/glucanases"/>
    <property type="match status" value="1"/>
</dbReference>
<dbReference type="PROSITE" id="PS00308">
    <property type="entry name" value="LECTIN_LEGUME_ALPHA"/>
    <property type="match status" value="1"/>
</dbReference>
<reference key="1">
    <citation type="journal article" date="1982" name="Eur. J. Biochem.">
        <title>Purification and characterization of a mannose/glucose-specific lectin from Vicia cracca.</title>
        <authorList>
            <person name="Baumann C.M."/>
            <person name="Strosberg A.D."/>
            <person name="Ruediger H."/>
        </authorList>
    </citation>
    <scope>PROTEIN SEQUENCE</scope>
</reference>
<feature type="chain" id="PRO_0000105116" description="Mannose/glucose-specific lectin alpha chain">
    <location>
        <begin position="1"/>
        <end position="53"/>
    </location>
</feature>
<comment type="function">
    <text>This lectin specifically binds mannose and glucose.</text>
</comment>
<comment type="subunit">
    <text>Heterodimer of an alpha and a beta chain.</text>
</comment>
<comment type="similarity">
    <text evidence="1">Belongs to the leguminous lectin family.</text>
</comment>
<evidence type="ECO:0000305" key="1"/>